<name>EXE1_HELSU</name>
<protein>
    <recommendedName>
        <fullName>Exendin-1</fullName>
    </recommendedName>
    <alternativeName>
        <fullName>Helospectin I</fullName>
    </alternativeName>
    <alternativeName>
        <fullName>Helospectin-1</fullName>
    </alternativeName>
    <alternativeName>
        <fullName>VIP-like 1</fullName>
    </alternativeName>
    <component>
        <recommendedName>
            <fullName>Exendin-1b</fullName>
        </recommendedName>
        <alternativeName>
            <fullName>Helospectin II</fullName>
        </alternativeName>
        <alternativeName>
            <fullName>Helospectin-2</fullName>
        </alternativeName>
    </component>
</protein>
<reference key="1">
    <citation type="journal article" date="1984" name="J. Biol. Chem.">
        <title>Amino acid sequences of helospectins, new members of the glucagon superfamily, found in Gila monster venom.</title>
        <authorList>
            <person name="Parker D.S."/>
            <person name="Raufman J.-P."/>
            <person name="O'Donohue T.L."/>
            <person name="Bledsoe M."/>
            <person name="Yoshida H."/>
            <person name="Pisano J.J."/>
        </authorList>
    </citation>
    <scope>PROTEIN SEQUENCE</scope>
    <source>
        <tissue>Venom</tissue>
    </source>
</reference>
<reference key="2">
    <citation type="journal article" date="2000" name="Eur. J. Biochem.">
        <title>Evidence that the lizard helospectin peptides are O-glycosylated.</title>
        <authorList>
            <person name="Vandermeers-Piret M.C."/>
            <person name="Vandermeers A."/>
            <person name="Gourlet P."/>
            <person name="Ali M.H."/>
            <person name="Waelbroeck M."/>
            <person name="Robberecht P."/>
        </authorList>
    </citation>
    <scope>PROTEIN SEQUENCE</scope>
    <scope>FUNCTION</scope>
    <scope>GLYCOSYLATION AT SER-32</scope>
    <scope>IDENTIFICATION BY MASS SPECTROMETRY</scope>
    <source>
        <tissue>Venom</tissue>
    </source>
</reference>
<reference key="3">
    <citation type="journal article" date="1998" name="Ann. N. Y. Acad. Sci.">
        <title>Analogues of VIP, helodermin, and PACAP discriminate between rat and human VIP1 and VIP2 receptors.</title>
        <authorList>
            <person name="Gourlet P."/>
            <person name="Vandermeers A."/>
            <person name="Van Rampelbergh J."/>
            <person name="De Neef P."/>
            <person name="Cnudde J."/>
            <person name="Waelbroeck M."/>
            <person name="Robberecht P."/>
        </authorList>
    </citation>
    <scope>FUNCTION</scope>
</reference>
<reference key="4">
    <citation type="journal article" date="2004" name="Peptides">
        <title>Helospectin I and II evoke vasodilation in the intact peripheral microcirculation.</title>
        <authorList>
            <person name="Tsueshita T."/>
            <person name="Onyukusel H."/>
            <person name="Sethi V."/>
            <person name="Gandhi S."/>
            <person name="Rubinstein I."/>
        </authorList>
    </citation>
    <scope>FUNCTION</scope>
</reference>
<reference key="5">
    <citation type="journal article" date="2010" name="Mol. Biol. Evol.">
        <title>Novel venom proteins produced by differential domain-expression strategies in beaded lizards and gila monsters (genus Heloderma).</title>
        <authorList>
            <person name="Fry B.G."/>
            <person name="Roelants K."/>
            <person name="Winter K."/>
            <person name="Hodgson W.C."/>
            <person name="Griesman L."/>
            <person name="Kwok H.F."/>
            <person name="Scanlon D."/>
            <person name="Karas J."/>
            <person name="Shaw C."/>
            <person name="Wong L."/>
            <person name="Norman J.A."/>
        </authorList>
    </citation>
    <scope>SYNTHESIS</scope>
    <scope>FUNCTION</scope>
</reference>
<comment type="function">
    <text evidence="1 2 3 4">O-linked and free exendin-1 and exendin-1b have vasoactive intestinal peptide(VIP)/secretin-like biological activities. They interact with rat and human VIP receptors 1 (VIPR1) and 2 (VIPR2), with the highest affinity for the human VIPR2. They induce hypotension that is mediated by relaxation of cardiac smooth muscle.</text>
</comment>
<comment type="subcellular location">
    <subcellularLocation>
        <location>Secreted</location>
    </subcellularLocation>
</comment>
<comment type="tissue specificity">
    <text>Expressed by the venom gland.</text>
</comment>
<comment type="PTM">
    <text evidence="1">Thr-32 is glycosylated by N-acetylgalactosamine and a hexose, probably Glu-GalNAc-Thr, a mucin type O-glycosylation which may affect the biological stability of exendin-1 and exendin-1b.</text>
</comment>
<comment type="similarity">
    <text evidence="5">Belongs to the glucagon family.</text>
</comment>
<evidence type="ECO:0000269" key="1">
    <source>
    </source>
</evidence>
<evidence type="ECO:0000269" key="2">
    <source>
    </source>
</evidence>
<evidence type="ECO:0000269" key="3">
    <source>
    </source>
</evidence>
<evidence type="ECO:0000269" key="4">
    <source>
    </source>
</evidence>
<evidence type="ECO:0000305" key="5"/>
<feature type="chain" id="PRO_0000011419" description="Exendin-1">
    <location>
        <begin position="1"/>
        <end position="38"/>
    </location>
</feature>
<feature type="chain" id="PRO_0000011420" description="Exendin-1b">
    <location>
        <begin position="1"/>
        <end position="37"/>
    </location>
</feature>
<feature type="glycosylation site" description="O-linked (GalNAc...) serine; in Exendin-1 and Exendin-1b" evidence="1">
    <location>
        <position position="32"/>
    </location>
</feature>
<organism>
    <name type="scientific">Heloderma suspectum</name>
    <name type="common">Gila monster</name>
    <dbReference type="NCBI Taxonomy" id="8554"/>
    <lineage>
        <taxon>Eukaryota</taxon>
        <taxon>Metazoa</taxon>
        <taxon>Chordata</taxon>
        <taxon>Craniata</taxon>
        <taxon>Vertebrata</taxon>
        <taxon>Euteleostomi</taxon>
        <taxon>Lepidosauria</taxon>
        <taxon>Squamata</taxon>
        <taxon>Bifurcata</taxon>
        <taxon>Unidentata</taxon>
        <taxon>Episquamata</taxon>
        <taxon>Toxicofera</taxon>
        <taxon>Anguimorpha</taxon>
        <taxon>Neoanguimorpha</taxon>
        <taxon>Helodermatidae</taxon>
        <taxon>Heloderma</taxon>
    </lineage>
</organism>
<sequence>HSDATFTAEYSKLLAKLALQKYLESILGSSTSPRPPSS</sequence>
<proteinExistence type="evidence at protein level"/>
<accession>P04203</accession>
<dbReference type="SMR" id="P04203"/>
<dbReference type="iPTMnet" id="P04203"/>
<dbReference type="GO" id="GO:0005576">
    <property type="term" value="C:extracellular region"/>
    <property type="evidence" value="ECO:0007669"/>
    <property type="project" value="UniProtKB-SubCell"/>
</dbReference>
<dbReference type="GO" id="GO:0005179">
    <property type="term" value="F:hormone activity"/>
    <property type="evidence" value="ECO:0007669"/>
    <property type="project" value="InterPro"/>
</dbReference>
<dbReference type="GO" id="GO:0090729">
    <property type="term" value="F:toxin activity"/>
    <property type="evidence" value="ECO:0007669"/>
    <property type="project" value="UniProtKB-KW"/>
</dbReference>
<dbReference type="GO" id="GO:0008217">
    <property type="term" value="P:regulation of blood pressure"/>
    <property type="evidence" value="ECO:0007669"/>
    <property type="project" value="UniProtKB-KW"/>
</dbReference>
<dbReference type="Gene3D" id="6.10.250.590">
    <property type="match status" value="1"/>
</dbReference>
<dbReference type="InterPro" id="IPR000532">
    <property type="entry name" value="Glucagon_GIP_secretin_VIP"/>
</dbReference>
<dbReference type="Pfam" id="PF00123">
    <property type="entry name" value="Hormone_2"/>
    <property type="match status" value="1"/>
</dbReference>
<dbReference type="SMART" id="SM00070">
    <property type="entry name" value="GLUCA"/>
    <property type="match status" value="1"/>
</dbReference>
<dbReference type="PROSITE" id="PS00260">
    <property type="entry name" value="GLUCAGON"/>
    <property type="match status" value="1"/>
</dbReference>
<keyword id="KW-0903">Direct protein sequencing</keyword>
<keyword id="KW-1213">G-protein coupled receptor impairing toxin</keyword>
<keyword id="KW-0325">Glycoprotein</keyword>
<keyword id="KW-0382">Hypotensive agent</keyword>
<keyword id="KW-0964">Secreted</keyword>
<keyword id="KW-0800">Toxin</keyword>